<feature type="chain" id="PRO_0000158082" description="Reverse gyrase">
    <location>
        <begin position="1"/>
        <end position="1104"/>
    </location>
</feature>
<feature type="domain" description="Helicase ATP-binding" evidence="1">
    <location>
        <begin position="87"/>
        <end position="242"/>
    </location>
</feature>
<feature type="domain" description="Helicase C-terminal" evidence="1">
    <location>
        <begin position="300"/>
        <end position="522"/>
    </location>
</feature>
<feature type="domain" description="Toprim" evidence="1">
    <location>
        <begin position="542"/>
        <end position="699"/>
    </location>
</feature>
<feature type="domain" description="Topo IA-type catalytic" evidence="4">
    <location>
        <begin position="715"/>
        <end position="1101"/>
    </location>
</feature>
<feature type="zinc finger region" description="RG N-terminal-type" evidence="2 10">
    <location>
        <begin position="1"/>
        <end position="39"/>
    </location>
</feature>
<feature type="zinc finger region" description="RG C-terminal-type" evidence="3 10">
    <location>
        <begin position="618"/>
        <end position="645"/>
    </location>
</feature>
<feature type="region of interest" description="Insert region" evidence="10">
    <location>
        <begin position="223"/>
        <end position="250"/>
    </location>
</feature>
<feature type="region of interest" description="Latch region" evidence="6 8 10">
    <location>
        <begin position="390"/>
        <end position="460"/>
    </location>
</feature>
<feature type="region of interest" description="Topoisomerase I" evidence="1">
    <location>
        <begin position="538"/>
        <end position="1104"/>
    </location>
</feature>
<feature type="short sequence motif" description="DEAD box" evidence="1">
    <location>
        <begin position="203"/>
        <end position="206"/>
    </location>
</feature>
<feature type="active site" description="O-(5'-phospho-DNA)-tyrosine intermediate" evidence="4 16">
    <location>
        <position position="851"/>
    </location>
</feature>
<feature type="binding site" evidence="1 10 21 22 23 26 27 28 29 30">
    <location>
        <position position="11"/>
    </location>
    <ligand>
        <name>Zn(2+)</name>
        <dbReference type="ChEBI" id="CHEBI:29105"/>
        <label>1</label>
    </ligand>
</feature>
<feature type="binding site" evidence="1 10 21 22 23 26 27 28 29 30">
    <location>
        <position position="14"/>
    </location>
    <ligand>
        <name>Zn(2+)</name>
        <dbReference type="ChEBI" id="CHEBI:29105"/>
        <label>1</label>
    </ligand>
</feature>
<feature type="binding site" evidence="1 10 21 22 23 26 27 28 29 30">
    <location>
        <position position="29"/>
    </location>
    <ligand>
        <name>Zn(2+)</name>
        <dbReference type="ChEBI" id="CHEBI:29105"/>
        <label>1</label>
    </ligand>
</feature>
<feature type="binding site" evidence="1 10 21 22 23 26 27 28 29 30">
    <location>
        <position position="32"/>
    </location>
    <ligand>
        <name>Zn(2+)</name>
        <dbReference type="ChEBI" id="CHEBI:29105"/>
        <label>1</label>
    </ligand>
</feature>
<feature type="binding site" evidence="8 24">
    <location>
        <position position="75"/>
    </location>
    <ligand>
        <name>ADP</name>
        <dbReference type="ChEBI" id="CHEBI:456216"/>
    </ligand>
</feature>
<feature type="binding site" evidence="8 24">
    <location>
        <position position="78"/>
    </location>
    <ligand>
        <name>ADP</name>
        <dbReference type="ChEBI" id="CHEBI:456216"/>
    </ligand>
</feature>
<feature type="binding site" evidence="8 24">
    <location>
        <position position="83"/>
    </location>
    <ligand>
        <name>ADP</name>
        <dbReference type="ChEBI" id="CHEBI:456216"/>
    </ligand>
</feature>
<feature type="binding site" evidence="1">
    <location>
        <position position="83"/>
    </location>
    <ligand>
        <name>ATP</name>
        <dbReference type="ChEBI" id="CHEBI:30616"/>
    </ligand>
</feature>
<feature type="binding site" evidence="1">
    <location>
        <begin position="100"/>
        <end position="107"/>
    </location>
    <ligand>
        <name>ATP</name>
        <dbReference type="ChEBI" id="CHEBI:30616"/>
    </ligand>
</feature>
<feature type="binding site" evidence="8 24">
    <location>
        <position position="103"/>
    </location>
    <ligand>
        <name>ADP</name>
        <dbReference type="ChEBI" id="CHEBI:456216"/>
    </ligand>
</feature>
<feature type="binding site" evidence="8 24">
    <location>
        <position position="105"/>
    </location>
    <ligand>
        <name>ADP</name>
        <dbReference type="ChEBI" id="CHEBI:456216"/>
    </ligand>
</feature>
<feature type="binding site" evidence="8 24">
    <location>
        <position position="106"/>
    </location>
    <ligand>
        <name>ADP</name>
        <dbReference type="ChEBI" id="CHEBI:456216"/>
    </ligand>
</feature>
<feature type="binding site" evidence="8 24">
    <location>
        <position position="107"/>
    </location>
    <ligand>
        <name>ADP</name>
        <dbReference type="ChEBI" id="CHEBI:456216"/>
    </ligand>
</feature>
<feature type="binding site" evidence="8 24">
    <location>
        <position position="108"/>
    </location>
    <ligand>
        <name>ADP</name>
        <dbReference type="ChEBI" id="CHEBI:456216"/>
    </ligand>
</feature>
<feature type="binding site" evidence="1">
    <location>
        <position position="548"/>
    </location>
    <ligand>
        <name>Mg(2+)</name>
        <dbReference type="ChEBI" id="CHEBI:18420"/>
        <note>catalytic</note>
    </ligand>
</feature>
<feature type="binding site" evidence="1 10 21 22 23 26 27 28 29 30">
    <location>
        <position position="621"/>
    </location>
    <ligand>
        <name>Zn(2+)</name>
        <dbReference type="ChEBI" id="CHEBI:29105"/>
        <label>2</label>
    </ligand>
</feature>
<feature type="binding site" evidence="1 10 21 22 23 26 27 28 29 30">
    <location>
        <position position="624"/>
    </location>
    <ligand>
        <name>Zn(2+)</name>
        <dbReference type="ChEBI" id="CHEBI:29105"/>
        <label>2</label>
    </ligand>
</feature>
<feature type="binding site" evidence="1 10 21 22 23 26 27 28 29 30">
    <location>
        <position position="635"/>
    </location>
    <ligand>
        <name>Zn(2+)</name>
        <dbReference type="ChEBI" id="CHEBI:29105"/>
        <label>2</label>
    </ligand>
</feature>
<feature type="binding site" evidence="1 10 21 22 23 26 27 28 29 30">
    <location>
        <position position="638"/>
    </location>
    <ligand>
        <name>Zn(2+)</name>
        <dbReference type="ChEBI" id="CHEBI:29105"/>
        <label>2</label>
    </ligand>
</feature>
<feature type="binding site" evidence="1">
    <location>
        <position position="668"/>
    </location>
    <ligand>
        <name>Mg(2+)</name>
        <dbReference type="ChEBI" id="CHEBI:18420"/>
        <note>catalytic</note>
    </ligand>
</feature>
<feature type="mutagenesis site" description="Reduced positive supercoiling, reduced affinity for ssDNA, no change in ATPase activity. Loss of positive supercoiling, loss of DNA relaxation with ATP; when associated with A-635--638-A." evidence="5 10">
    <original>CINC</original>
    <variation>AINA</variation>
    <location>
        <begin position="11"/>
        <end position="14"/>
    </location>
</feature>
<feature type="mutagenesis site" description="Reduced positive supercoiling, no ATPase activity, no preference for ATP, no activity in presence of GTP, binds and cleaves ssDNA slightly less efficiently." evidence="5">
    <original>Q</original>
    <variation>L</variation>
    <location>
        <position position="83"/>
    </location>
</feature>
<feature type="mutagenesis site" description="No positive supercoiling, no ATPase activity, binds and cleaves ssDNA." evidence="5">
    <original>K</original>
    <variation>I</variation>
    <location>
        <position position="106"/>
    </location>
</feature>
<feature type="mutagenesis site" description="No positive supercoiling, no ATPase activity, binds and cleaves ssDNA." evidence="5">
    <original>DD</original>
    <variation>AA</variation>
    <location>
        <begin position="203"/>
        <end position="204"/>
    </location>
</feature>
<feature type="mutagenesis site" description="Decreases affinity for ssDNA and dsDNA 13- to 15-fold." evidence="10">
    <location>
        <begin position="224"/>
        <end position="249"/>
    </location>
</feature>
<feature type="mutagenesis site" description="No positive supercoiling, no ATPase activity, binds and cleaves ssDNA slightly less efficiently." evidence="5">
    <original>RGVD</original>
    <variation>ALVA</variation>
    <location>
        <begin position="370"/>
        <end position="373"/>
    </location>
</feature>
<feature type="mutagenesis site" description="No positive supercoiling, alters coupling of DNA binding with ATP binding and hydrolysis. Removes the latch." evidence="6">
    <location>
        <begin position="389"/>
        <end position="459"/>
    </location>
</feature>
<feature type="mutagenesis site" description="Positively supercoils plasmid DNA with about 10-fold reduction in efficiency. A minilatch." evidence="11">
    <location>
        <begin position="395"/>
        <end position="455"/>
    </location>
</feature>
<feature type="mutagenesis site" description="No positive supercoiling, no ATPase activity, binds and cleaves ssDNA." evidence="5">
    <original>GRSSR</original>
    <variation>LASSA</variation>
    <location>
        <begin position="470"/>
        <end position="474"/>
    </location>
</feature>
<feature type="mutagenesis site" description="Loss of positive supercoiling, loss of DNA relaxation with ATP; when associated with A-11--14-A." evidence="10">
    <original>CPVC</original>
    <variation>APVA</variation>
    <location>
        <begin position="635"/>
        <end position="638"/>
    </location>
</feature>
<feature type="mutagenesis site" description="No positive supercoiling, binds but does not cleave DNA. Very few structural changes from wild-type enzyme." evidence="5 12">
    <original>Y</original>
    <variation>F</variation>
    <location>
        <position position="851"/>
    </location>
</feature>
<feature type="turn" evidence="35">
    <location>
        <begin position="12"/>
        <end position="14"/>
    </location>
</feature>
<feature type="helix" evidence="35">
    <location>
        <begin position="20"/>
        <end position="24"/>
    </location>
</feature>
<feature type="turn" evidence="35">
    <location>
        <begin position="30"/>
        <end position="32"/>
    </location>
</feature>
<feature type="helix" evidence="35">
    <location>
        <begin position="41"/>
        <end position="47"/>
    </location>
</feature>
<feature type="helix" evidence="32">
    <location>
        <begin position="61"/>
        <end position="75"/>
    </location>
</feature>
<feature type="helix" evidence="32">
    <location>
        <begin position="81"/>
        <end position="90"/>
    </location>
</feature>
<feature type="turn" evidence="32">
    <location>
        <begin position="91"/>
        <end position="93"/>
    </location>
</feature>
<feature type="strand" evidence="33">
    <location>
        <begin position="95"/>
        <end position="99"/>
    </location>
</feature>
<feature type="strand" evidence="32">
    <location>
        <begin position="102"/>
        <end position="105"/>
    </location>
</feature>
<feature type="helix" evidence="32">
    <location>
        <begin position="106"/>
        <end position="118"/>
    </location>
</feature>
<feature type="turn" evidence="32">
    <location>
        <begin position="119"/>
        <end position="121"/>
    </location>
</feature>
<feature type="strand" evidence="32">
    <location>
        <begin position="124"/>
        <end position="130"/>
    </location>
</feature>
<feature type="helix" evidence="32">
    <location>
        <begin position="131"/>
        <end position="144"/>
    </location>
</feature>
<feature type="strand" evidence="32">
    <location>
        <begin position="151"/>
        <end position="153"/>
    </location>
</feature>
<feature type="helix" evidence="32">
    <location>
        <begin position="160"/>
        <end position="172"/>
    </location>
</feature>
<feature type="strand" evidence="32">
    <location>
        <begin position="176"/>
        <end position="181"/>
    </location>
</feature>
<feature type="helix" evidence="32">
    <location>
        <begin position="182"/>
        <end position="187"/>
    </location>
</feature>
<feature type="helix" evidence="32">
    <location>
        <begin position="189"/>
        <end position="192"/>
    </location>
</feature>
<feature type="strand" evidence="32">
    <location>
        <begin position="198"/>
        <end position="203"/>
    </location>
</feature>
<feature type="helix" evidence="32">
    <location>
        <begin position="205"/>
        <end position="210"/>
    </location>
</feature>
<feature type="helix" evidence="32">
    <location>
        <begin position="212"/>
        <end position="221"/>
    </location>
</feature>
<feature type="helix" evidence="32">
    <location>
        <begin position="226"/>
        <end position="238"/>
    </location>
</feature>
<feature type="strand" evidence="32">
    <location>
        <begin position="252"/>
        <end position="257"/>
    </location>
</feature>
<feature type="strand" evidence="34">
    <location>
        <begin position="258"/>
        <end position="260"/>
    </location>
</feature>
<feature type="helix" evidence="32">
    <location>
        <begin position="268"/>
        <end position="274"/>
    </location>
</feature>
<feature type="strand" evidence="32">
    <location>
        <begin position="287"/>
        <end position="295"/>
    </location>
</feature>
<feature type="helix" evidence="32">
    <location>
        <begin position="298"/>
        <end position="308"/>
    </location>
</feature>
<feature type="strand" evidence="32">
    <location>
        <begin position="310"/>
        <end position="318"/>
    </location>
</feature>
<feature type="helix" evidence="32">
    <location>
        <begin position="319"/>
        <end position="331"/>
    </location>
</feature>
<feature type="strand" evidence="32">
    <location>
        <begin position="336"/>
        <end position="341"/>
    </location>
</feature>
<feature type="helix" evidence="32">
    <location>
        <begin position="343"/>
        <end position="351"/>
    </location>
</feature>
<feature type="strand" evidence="32">
    <location>
        <begin position="356"/>
        <end position="361"/>
    </location>
</feature>
<feature type="turn" evidence="34">
    <location>
        <begin position="362"/>
        <end position="364"/>
    </location>
</feature>
<feature type="helix" evidence="32">
    <location>
        <begin position="367"/>
        <end position="371"/>
    </location>
</feature>
<feature type="turn" evidence="32">
    <location>
        <begin position="375"/>
        <end position="377"/>
    </location>
</feature>
<feature type="strand" evidence="32">
    <location>
        <begin position="380"/>
        <end position="385"/>
    </location>
</feature>
<feature type="strand" evidence="35">
    <location>
        <begin position="388"/>
        <end position="391"/>
    </location>
</feature>
<feature type="turn" evidence="35">
    <location>
        <begin position="392"/>
        <end position="394"/>
    </location>
</feature>
<feature type="helix" evidence="34">
    <location>
        <begin position="395"/>
        <end position="397"/>
    </location>
</feature>
<feature type="helix" evidence="34">
    <location>
        <begin position="400"/>
        <end position="409"/>
    </location>
</feature>
<feature type="helix" evidence="34">
    <location>
        <begin position="421"/>
        <end position="429"/>
    </location>
</feature>
<feature type="helix" evidence="34">
    <location>
        <begin position="434"/>
        <end position="444"/>
    </location>
</feature>
<feature type="strand" evidence="34">
    <location>
        <begin position="447"/>
        <end position="451"/>
    </location>
</feature>
<feature type="turn" evidence="34">
    <location>
        <begin position="452"/>
        <end position="455"/>
    </location>
</feature>
<feature type="strand" evidence="35">
    <location>
        <begin position="457"/>
        <end position="460"/>
    </location>
</feature>
<feature type="helix" evidence="32">
    <location>
        <begin position="462"/>
        <end position="469"/>
    </location>
</feature>
<feature type="helix" evidence="32">
    <location>
        <begin position="470"/>
        <end position="472"/>
    </location>
</feature>
<feature type="strand" evidence="35">
    <location>
        <begin position="474"/>
        <end position="476"/>
    </location>
</feature>
<feature type="strand" evidence="32">
    <location>
        <begin position="483"/>
        <end position="488"/>
    </location>
</feature>
<feature type="helix" evidence="32">
    <location>
        <begin position="492"/>
        <end position="506"/>
    </location>
</feature>
<feature type="strand" evidence="32">
    <location>
        <begin position="510"/>
        <end position="512"/>
    </location>
</feature>
<feature type="helix" evidence="32">
    <location>
        <begin position="513"/>
        <end position="515"/>
    </location>
</feature>
<feature type="helix" evidence="32">
    <location>
        <begin position="518"/>
        <end position="533"/>
    </location>
</feature>
<feature type="strand" evidence="35">
    <location>
        <begin position="543"/>
        <end position="548"/>
    </location>
</feature>
<feature type="helix" evidence="35">
    <location>
        <begin position="550"/>
        <end position="560"/>
    </location>
</feature>
<feature type="strand" evidence="35">
    <location>
        <begin position="564"/>
        <end position="568"/>
    </location>
</feature>
<feature type="strand" evidence="35">
    <location>
        <begin position="571"/>
        <end position="578"/>
    </location>
</feature>
<feature type="strand" evidence="35">
    <location>
        <begin position="581"/>
        <end position="587"/>
    </location>
</feature>
<feature type="strand" evidence="35">
    <location>
        <begin position="592"/>
        <end position="595"/>
    </location>
</feature>
<feature type="strand" evidence="35">
    <location>
        <begin position="597"/>
        <end position="599"/>
    </location>
</feature>
<feature type="strand" evidence="35">
    <location>
        <begin position="604"/>
        <end position="607"/>
    </location>
</feature>
<feature type="strand" evidence="35">
    <location>
        <begin position="610"/>
        <end position="617"/>
    </location>
</feature>
<feature type="strand" evidence="35">
    <location>
        <begin position="619"/>
        <end position="621"/>
    </location>
</feature>
<feature type="turn" evidence="35">
    <location>
        <begin position="622"/>
        <end position="624"/>
    </location>
</feature>
<feature type="turn" evidence="35">
    <location>
        <begin position="636"/>
        <end position="638"/>
    </location>
</feature>
<feature type="strand" evidence="35">
    <location>
        <begin position="643"/>
        <end position="645"/>
    </location>
</feature>
<feature type="helix" evidence="35">
    <location>
        <begin position="646"/>
        <end position="659"/>
    </location>
</feature>
<feature type="strand" evidence="35">
    <location>
        <begin position="661"/>
        <end position="665"/>
    </location>
</feature>
<feature type="helix" evidence="35">
    <location>
        <begin position="671"/>
        <end position="684"/>
    </location>
</feature>
<feature type="turn" evidence="35">
    <location>
        <begin position="685"/>
        <end position="687"/>
    </location>
</feature>
<feature type="strand" evidence="35">
    <location>
        <begin position="691"/>
        <end position="693"/>
    </location>
</feature>
<feature type="strand" evidence="35">
    <location>
        <begin position="697"/>
        <end position="700"/>
    </location>
</feature>
<feature type="helix" evidence="35">
    <location>
        <begin position="701"/>
        <end position="709"/>
    </location>
</feature>
<feature type="helix" evidence="35">
    <location>
        <begin position="716"/>
        <end position="744"/>
    </location>
</feature>
<feature type="helix" evidence="35">
    <location>
        <begin position="753"/>
        <end position="771"/>
    </location>
</feature>
<feature type="strand" evidence="35">
    <location>
        <begin position="773"/>
        <end position="781"/>
    </location>
</feature>
<feature type="strand" evidence="35">
    <location>
        <begin position="787"/>
        <end position="791"/>
    </location>
</feature>
<feature type="strand" evidence="35">
    <location>
        <begin position="796"/>
        <end position="810"/>
    </location>
</feature>
<feature type="helix" evidence="35">
    <location>
        <begin position="818"/>
        <end position="829"/>
    </location>
</feature>
<feature type="helix" evidence="35">
    <location>
        <begin position="833"/>
        <end position="845"/>
    </location>
</feature>
<feature type="strand" evidence="35">
    <location>
        <begin position="848"/>
        <end position="850"/>
    </location>
</feature>
<feature type="helix" evidence="35">
    <location>
        <begin position="861"/>
        <end position="873"/>
    </location>
</feature>
<feature type="helix" evidence="35">
    <location>
        <begin position="877"/>
        <end position="879"/>
    </location>
</feature>
<feature type="strand" evidence="35">
    <location>
        <begin position="896"/>
        <end position="899"/>
    </location>
</feature>
<feature type="helix" evidence="35">
    <location>
        <begin position="902"/>
        <end position="910"/>
    </location>
</feature>
<feature type="helix" evidence="35">
    <location>
        <begin position="919"/>
        <end position="935"/>
    </location>
</feature>
<feature type="strand" evidence="35">
    <location>
        <begin position="940"/>
        <end position="951"/>
    </location>
</feature>
<feature type="strand" evidence="35">
    <location>
        <begin position="954"/>
        <end position="966"/>
    </location>
</feature>
<feature type="helix" evidence="35">
    <location>
        <begin position="969"/>
        <end position="971"/>
    </location>
</feature>
<feature type="strand" evidence="35">
    <location>
        <begin position="983"/>
        <end position="999"/>
    </location>
</feature>
<feature type="helix" evidence="35">
    <location>
        <begin position="1004"/>
        <end position="1014"/>
    </location>
</feature>
<feature type="turn" evidence="35">
    <location>
        <begin position="1019"/>
        <end position="1021"/>
    </location>
</feature>
<feature type="helix" evidence="35">
    <location>
        <begin position="1022"/>
        <end position="1031"/>
    </location>
</feature>
<feature type="strand" evidence="35">
    <location>
        <begin position="1034"/>
        <end position="1037"/>
    </location>
</feature>
<feature type="strand" evidence="35">
    <location>
        <begin position="1043"/>
        <end position="1045"/>
    </location>
</feature>
<feature type="helix" evidence="35">
    <location>
        <begin position="1047"/>
        <end position="1064"/>
    </location>
</feature>
<feature type="helix" evidence="35">
    <location>
        <begin position="1066"/>
        <end position="1080"/>
    </location>
</feature>
<feature type="helix" evidence="35">
    <location>
        <begin position="1086"/>
        <end position="1100"/>
    </location>
</feature>
<sequence>MAVNSKYHHSCINCGGLNTDERNERGLPCEVCLPEDSPSDIYRALLERKTLKEYRFYHEFWNEYEDFRSFFKKKFGKDLTGYQRLWAKRIVQGKSFTMVAPTGVGKTTFGMMTALWLARKGKKSALVFPTVTLVKQTLERLQKLADEKVKIFGFYSSMKKEEKEKFEKSFEEDDYHILVFSTQFVSKNREKLSQKRFDFVFVDDVDAVLKASRNIDTLLMMVGIPEEIIRKAFSTIKQGKIYERPKNLKPGILVVSSATAKPRGIRPLLFRDLLNFTVGRLVSVARNITHVRISSRSKEKLVELLEIFRDGILIFAQTEEEGKELYEYLKRFKFNVGETWSEFEKNFEDFKVGKINILIGVQAYYGKLTRGVDLPERIKYVIFWGTPSMRFSLELDKAPRFVLARVLKEMGLIKAQENPDVEELRKIAKEHLTQKEFVEKVKEMFRGVVVKDEDLELIIPDVYTYIQASGRSSRILNGVLVKGVSVIFEEDEEIFESLKTRLLLIAEEEIIEEAEANWKELVHEVEESRRRSERELTDTSRSLLIIVESPTKAETLSRFLGRASSRKERNIIVHEAVTGEGVILFTATRGHVYDLVTKGGIHGVEEENGKFVPVYNSLKRCRDCGYQFTEDRDECPVCSSKNIDDKTETLRALREISLEADEILVATDPDVEGEKISWDVTQYLLPSTRSLRRIEMHEITRYGFKKARESVRFVDFNLVKAQIVRRVQDRWIGFELSGKLQKRFGRSNLSAGRVQSTVLGWIVEREEEYKKSEKDFTLLVLENGVNLEVEGKIADDVVTVVELQEAEEEKNPLPPYTTSSALSEISQKLRLGVQEVMDILQDLFEKGFITYHRTDSTRISLEGQNVARTYLRKIGKEDIFMGRSWSTEGAHEAIRPVKPIDARELEEMIEEGLIADLTKKHLRVYELIFNRFLASQSAAVKVKKQIVTVDVDGKRMGIEQIVEILRDGWNLFVPLTVSPRFEHRTYKIKEKKFYKKHTVPLFTQASIVEEMKKRGIGRPSTYAKIVEVLFRRGYVYEDKYKRVRPTRFGVMVYSYLKERYEKYVTEETTRRLEEIMDKVERGEEDYQATLRLLYEEIKSLMEEG</sequence>
<proteinExistence type="evidence at protein level"/>
<reference key="1">
    <citation type="journal article" date="1998" name="J. Bacteriol.">
        <title>Reverse gyrase from the hyperthermophilic bacterium Thermotoga maritima: properties and gene structure.</title>
        <authorList>
            <person name="Bouthier de la Tour C."/>
            <person name="Portemer C."/>
            <person name="Kaltoum H."/>
            <person name="Duguet M."/>
        </authorList>
    </citation>
    <scope>NUCLEOTIDE SEQUENCE [GENOMIC DNA]</scope>
    <scope>FUNCTION</scope>
    <scope>CATALYTIC ACTIVITY</scope>
    <scope>COFACTOR</scope>
    <scope>BIOPHYSICOCHEMICAL PROPERTIES</scope>
    <source>
        <strain>ATCC 43589 / DSM 3109 / JCM 10099 / NBRC 100826 / MSB8</strain>
    </source>
</reference>
<reference key="2">
    <citation type="journal article" date="1999" name="Nature">
        <title>Evidence for lateral gene transfer between Archaea and Bacteria from genome sequence of Thermotoga maritima.</title>
        <authorList>
            <person name="Nelson K.E."/>
            <person name="Clayton R.A."/>
            <person name="Gill S.R."/>
            <person name="Gwinn M.L."/>
            <person name="Dodson R.J."/>
            <person name="Haft D.H."/>
            <person name="Hickey E.K."/>
            <person name="Peterson J.D."/>
            <person name="Nelson W.C."/>
            <person name="Ketchum K.A."/>
            <person name="McDonald L.A."/>
            <person name="Utterback T.R."/>
            <person name="Malek J.A."/>
            <person name="Linher K.D."/>
            <person name="Garrett M.M."/>
            <person name="Stewart A.M."/>
            <person name="Cotton M.D."/>
            <person name="Pratt M.S."/>
            <person name="Phillips C.A."/>
            <person name="Richardson D.L."/>
            <person name="Heidelberg J.F."/>
            <person name="Sutton G.G."/>
            <person name="Fleischmann R.D."/>
            <person name="Eisen J.A."/>
            <person name="White O."/>
            <person name="Salzberg S.L."/>
            <person name="Smith H.O."/>
            <person name="Venter J.C."/>
            <person name="Fraser C.M."/>
        </authorList>
    </citation>
    <scope>NUCLEOTIDE SEQUENCE [LARGE SCALE GENOMIC DNA]</scope>
    <source>
        <strain>ATCC 43589 / DSM 3109 / JCM 10099 / NBRC 100826 / MSB8</strain>
    </source>
</reference>
<reference key="3">
    <citation type="journal article" date="2008" name="J. Biol. Chem.">
        <title>Mutational analysis of the helicase-like domain of Thermotoga maritima reverse gyrase.</title>
        <authorList>
            <person name="de la Tour C.B."/>
            <person name="Amrani L."/>
            <person name="Cossard R."/>
            <person name="Neuman K.C."/>
            <person name="Serre M.C."/>
            <person name="Duguet M."/>
        </authorList>
    </citation>
    <scope>FUNCTION</scope>
    <scope>CATALYTIC ACTIVITY</scope>
    <scope>ACTIVE SITE</scope>
    <scope>BIOPHYSICOCHEMICAL PROPERTIES</scope>
    <scope>DOMAIN</scope>
    <scope>DNA-BINDING</scope>
    <scope>MUTAGENESIS OF 11-CYS--CYS-14; GLN-83; LYS-106; 203-ASP-ASP-204; 370-ARG--ASP-373; 470-GLY--ARG-474 AND TYR-851</scope>
</reference>
<reference key="4">
    <citation type="journal article" date="2011" name="Phys. Chem. Chem. Phys.">
        <title>Nucleotide-driven conformational changes in the reverse gyrase helicase-like domain couple the nucleotide cycle to DNA processing.</title>
        <authorList>
            <person name="del Toro Duany Y."/>
            <person name="Klostermeier D."/>
        </authorList>
    </citation>
    <scope>FUNCTION</scope>
    <scope>DOMAIN</scope>
    <scope>NUCLEOTIDE-BINDING</scope>
    <scope>DNA-BINDING</scope>
</reference>
<reference key="5">
    <citation type="journal article" date="2013" name="J. Mol. Biol.">
        <title>Reverse gyrase transiently unwinds double-stranded DNA in an ATP-dependent reaction.</title>
        <authorList>
            <person name="Ganguly A."/>
            <person name="del Toro Duany Y."/>
            <person name="Klostermeier D."/>
        </authorList>
    </citation>
    <scope>VERY POOR HELICASE ACTIVITY</scope>
</reference>
<reference key="6">
    <citation type="journal article" date="2020" name="J. Mol. Biol.">
        <title>A beta-hairpin is a Minimal Latch that Supports Positive Supercoiling by Reverse Gyrase.</title>
        <authorList>
            <person name="Collin F."/>
            <person name="Weisslocker-Schaetzel M."/>
            <person name="Klostermeier D."/>
        </authorList>
    </citation>
    <scope>FUNCTION</scope>
    <scope>CATALYTIC ACTIVITY</scope>
    <scope>REACTION MECHANISM</scope>
    <scope>DOMAIN</scope>
    <scope>MUTAGENESIS OF 395-LEU--LEU-455</scope>
</reference>
<reference evidence="20" key="7">
    <citation type="journal article" date="2011" name="Nucleic Acids Res.">
        <title>The latch modulates nucleotide and DNA binding to the helicase-like domain of Thermotoga maritima reverse gyrase and is required for positive DNA supercoiling.</title>
        <authorList>
            <person name="Ganguly A."/>
            <person name="Del Toro Duany Y."/>
            <person name="Rudolph M.G."/>
            <person name="Klostermeier D."/>
        </authorList>
    </citation>
    <scope>X-RAY CRYSTALLOGRAPHY (2.35 ANGSTROMS) OF 59-541 DELETED OF LATCH REGION</scope>
    <scope>FUNCTION</scope>
    <scope>CATALYTIC ACTIVITY</scope>
    <scope>BIOPHYSICOCHEMICAL PROPERTIES</scope>
    <scope>ATP-BINDING</scope>
    <scope>DNA-BINDING</scope>
    <scope>DOMAIN</scope>
    <scope>MUTAGENESIS OF 389-MET--ILE-459</scope>
</reference>
<reference evidence="24 25" key="8">
    <citation type="journal article" date="2011" name="Biochemistry">
        <title>The conformational flexibility of the helicase-like domain from Thermotoga maritima reverse gyrase is restricted by the topoisomerase domain.</title>
        <authorList>
            <person name="del Toro Duany Y."/>
            <person name="Klostermeier D."/>
            <person name="Rudolph M.G."/>
        </authorList>
    </citation>
    <scope>X-RAY CRYSTALLOGRAPHY (2.41 ANGSTROMS) OF 59-541 DELETED OF LATCH REGION IN COMPLEX WITH ADP</scope>
</reference>
<reference evidence="26 27 28 29 30" key="9">
    <citation type="journal article" date="2013" name="Nucleic Acids Res.">
        <title>Crystal structures of Thermotoga maritima reverse gyrase: inferences for the mechanism of positive DNA supercoiling.</title>
        <authorList>
            <person name="Rudolph M.G."/>
            <person name="del Toro Duany Y."/>
            <person name="Jungblut S.P."/>
            <person name="Ganguly A."/>
            <person name="Klostermeier D."/>
        </authorList>
    </citation>
    <scope>X-RAY CRYSTALLOGRAPHY (3.00 ANGSTROMS) IN COMPLEX WITH ZN(2+)</scope>
    <scope>FUNCTION</scope>
    <scope>CATALYTIC ACTIVITY</scope>
    <scope>SUBUNIT</scope>
    <scope>DOMAIN</scope>
    <scope>ZINC FINGERS</scope>
    <scope>MUTAGENESIS OF 11-CYS--CYS-14; 224-ILE--LYS-249 AND 635-CYS--CYS-638</scope>
</reference>
<reference evidence="21 22 31" key="10">
    <citation type="journal article" date="2023" name="Acta Crystallogr. D Struct. Biol.">
        <title>Structure of reverse gyrase with a minimal latch that supports ATP-dependent positive supercoiling without specific interactions with the topoisomerase domain.</title>
        <authorList>
            <person name="Mhaindarkar V.P."/>
            <person name="Rasche R."/>
            <person name="Kuemmel D."/>
            <person name="Rudolph M.G."/>
            <person name="Klostermeier D."/>
        </authorList>
    </citation>
    <scope>X-RAY CRYSTALLOGRAPHY (2.39 ANGSTROMS) OF A MINIMAL LATCH IN COMPLEX WITH ZN(2+)</scope>
    <scope>X-RAY CRYSTALLOGRAPHY (2.77 ANGSTROMS) OF INACTIVE ENZYME IN COMPLEX WITH ZN(2+)</scope>
    <scope>DOMAIN</scope>
    <scope>MUTAGENESIS OF TYR-851</scope>
</reference>
<organism>
    <name type="scientific">Thermotoga maritima (strain ATCC 43589 / DSM 3109 / JCM 10099 / NBRC 100826 / MSB8)</name>
    <dbReference type="NCBI Taxonomy" id="243274"/>
    <lineage>
        <taxon>Bacteria</taxon>
        <taxon>Thermotogati</taxon>
        <taxon>Thermotogota</taxon>
        <taxon>Thermotogae</taxon>
        <taxon>Thermotogales</taxon>
        <taxon>Thermotogaceae</taxon>
        <taxon>Thermotoga</taxon>
    </lineage>
</organism>
<dbReference type="EC" id="5.6.2.-" evidence="1 5 6 10 13"/>
<dbReference type="EMBL" id="AF013268">
    <property type="protein sequence ID" value="AAC01563.1"/>
    <property type="molecule type" value="Genomic_DNA"/>
</dbReference>
<dbReference type="EMBL" id="AE000512">
    <property type="protein sequence ID" value="AAD35266.1"/>
    <property type="molecule type" value="Genomic_DNA"/>
</dbReference>
<dbReference type="PIR" id="C72409">
    <property type="entry name" value="C72409"/>
</dbReference>
<dbReference type="RefSeq" id="NP_227988.1">
    <property type="nucleotide sequence ID" value="NC_000853.1"/>
</dbReference>
<dbReference type="PDB" id="3OIY">
    <property type="method" value="X-ray"/>
    <property type="resolution" value="2.35 A"/>
    <property type="chains" value="A/B=59-541"/>
</dbReference>
<dbReference type="PDB" id="3P4X">
    <property type="method" value="X-ray"/>
    <property type="resolution" value="2.41 A"/>
    <property type="chains" value="A/B=59-541"/>
</dbReference>
<dbReference type="PDB" id="3P4Y">
    <property type="method" value="X-ray"/>
    <property type="resolution" value="3.20 A"/>
    <property type="chains" value="A=59-541"/>
</dbReference>
<dbReference type="PDB" id="4DDT">
    <property type="method" value="X-ray"/>
    <property type="resolution" value="3.20 A"/>
    <property type="chains" value="A=1-1104"/>
</dbReference>
<dbReference type="PDB" id="4DDU">
    <property type="method" value="X-ray"/>
    <property type="resolution" value="3.00 A"/>
    <property type="chains" value="A=1-1104"/>
</dbReference>
<dbReference type="PDB" id="4DDV">
    <property type="method" value="X-ray"/>
    <property type="resolution" value="3.46 A"/>
    <property type="chains" value="A/B=1-1104"/>
</dbReference>
<dbReference type="PDB" id="4DDW">
    <property type="method" value="X-ray"/>
    <property type="resolution" value="3.90 A"/>
    <property type="chains" value="A=1-1104"/>
</dbReference>
<dbReference type="PDB" id="4DDX">
    <property type="method" value="X-ray"/>
    <property type="resolution" value="4.17 A"/>
    <property type="chains" value="A/B=1-1104"/>
</dbReference>
<dbReference type="PDB" id="7FSE">
    <property type="method" value="X-ray"/>
    <property type="resolution" value="2.89 A"/>
    <property type="chains" value="A=1-1104"/>
</dbReference>
<dbReference type="PDB" id="7FSF">
    <property type="method" value="X-ray"/>
    <property type="resolution" value="2.77 A"/>
    <property type="chains" value="A=1-1104"/>
</dbReference>
<dbReference type="PDB" id="8OFB">
    <property type="method" value="X-ray"/>
    <property type="resolution" value="2.39 A"/>
    <property type="chains" value="A=1-1104"/>
</dbReference>
<dbReference type="PDBsum" id="3OIY"/>
<dbReference type="PDBsum" id="3P4X"/>
<dbReference type="PDBsum" id="3P4Y"/>
<dbReference type="PDBsum" id="4DDT"/>
<dbReference type="PDBsum" id="4DDU"/>
<dbReference type="PDBsum" id="4DDV"/>
<dbReference type="PDBsum" id="4DDW"/>
<dbReference type="PDBsum" id="4DDX"/>
<dbReference type="PDBsum" id="7FSE"/>
<dbReference type="PDBsum" id="7FSF"/>
<dbReference type="PDBsum" id="8OFB"/>
<dbReference type="SMR" id="O51934"/>
<dbReference type="STRING" id="243274.TM_0173"/>
<dbReference type="PaxDb" id="243274-THEMA_03935"/>
<dbReference type="EnsemblBacteria" id="AAD35266">
    <property type="protein sequence ID" value="AAD35266"/>
    <property type="gene ID" value="TM_0173"/>
</dbReference>
<dbReference type="KEGG" id="tma:TM0173"/>
<dbReference type="KEGG" id="tmi:THEMA_03935"/>
<dbReference type="KEGG" id="tmm:Tmari_0171"/>
<dbReference type="KEGG" id="tmw:THMA_0169"/>
<dbReference type="eggNOG" id="COG1110">
    <property type="taxonomic scope" value="Bacteria"/>
</dbReference>
<dbReference type="InParanoid" id="O51934"/>
<dbReference type="OrthoDB" id="9804262at2"/>
<dbReference type="EvolutionaryTrace" id="O51934"/>
<dbReference type="Proteomes" id="UP000008183">
    <property type="component" value="Chromosome"/>
</dbReference>
<dbReference type="GO" id="GO:0005737">
    <property type="term" value="C:cytoplasm"/>
    <property type="evidence" value="ECO:0007669"/>
    <property type="project" value="UniProtKB-SubCell"/>
</dbReference>
<dbReference type="GO" id="GO:0005524">
    <property type="term" value="F:ATP binding"/>
    <property type="evidence" value="ECO:0007669"/>
    <property type="project" value="UniProtKB-UniRule"/>
</dbReference>
<dbReference type="GO" id="GO:0016887">
    <property type="term" value="F:ATP hydrolysis activity"/>
    <property type="evidence" value="ECO:0007669"/>
    <property type="project" value="InterPro"/>
</dbReference>
<dbReference type="GO" id="GO:0003677">
    <property type="term" value="F:DNA binding"/>
    <property type="evidence" value="ECO:0007669"/>
    <property type="project" value="UniProtKB-UniRule"/>
</dbReference>
<dbReference type="GO" id="GO:0003918">
    <property type="term" value="F:DNA topoisomerase type II (double strand cut, ATP-hydrolyzing) activity"/>
    <property type="evidence" value="ECO:0007669"/>
    <property type="project" value="UniProtKB-EC"/>
</dbReference>
<dbReference type="GO" id="GO:0160097">
    <property type="term" value="F:reverse gyrase activity"/>
    <property type="evidence" value="ECO:0000314"/>
    <property type="project" value="UniProtKB"/>
</dbReference>
<dbReference type="GO" id="GO:0008270">
    <property type="term" value="F:zinc ion binding"/>
    <property type="evidence" value="ECO:0000314"/>
    <property type="project" value="UniProtKB"/>
</dbReference>
<dbReference type="GO" id="GO:0006265">
    <property type="term" value="P:DNA topological change"/>
    <property type="evidence" value="ECO:0000314"/>
    <property type="project" value="UniProtKB"/>
</dbReference>
<dbReference type="CDD" id="cd17924">
    <property type="entry name" value="DDXDc_reverse_gyrase"/>
    <property type="match status" value="1"/>
</dbReference>
<dbReference type="CDD" id="cd18798">
    <property type="entry name" value="SF2_C_reverse_gyrase"/>
    <property type="match status" value="1"/>
</dbReference>
<dbReference type="CDD" id="cd00186">
    <property type="entry name" value="TOP1Ac"/>
    <property type="match status" value="1"/>
</dbReference>
<dbReference type="CDD" id="cd03361">
    <property type="entry name" value="TOPRIM_TopoIA_RevGyr"/>
    <property type="match status" value="1"/>
</dbReference>
<dbReference type="Gene3D" id="2.60.510.20">
    <property type="match status" value="1"/>
</dbReference>
<dbReference type="Gene3D" id="3.30.56.80">
    <property type="match status" value="1"/>
</dbReference>
<dbReference type="Gene3D" id="3.40.50.140">
    <property type="match status" value="1"/>
</dbReference>
<dbReference type="Gene3D" id="3.40.50.300">
    <property type="entry name" value="P-loop containing nucleotide triphosphate hydrolases"/>
    <property type="match status" value="3"/>
</dbReference>
<dbReference type="Gene3D" id="1.10.460.10">
    <property type="entry name" value="Topoisomerase I, domain 2"/>
    <property type="match status" value="1"/>
</dbReference>
<dbReference type="Gene3D" id="1.10.290.10">
    <property type="entry name" value="Topoisomerase I, domain 4"/>
    <property type="match status" value="1"/>
</dbReference>
<dbReference type="HAMAP" id="MF_01125">
    <property type="entry name" value="Reverse_gyrase"/>
    <property type="match status" value="1"/>
</dbReference>
<dbReference type="InterPro" id="IPR003593">
    <property type="entry name" value="AAA+_ATPase"/>
</dbReference>
<dbReference type="InterPro" id="IPR011545">
    <property type="entry name" value="DEAD/DEAH_box_helicase_dom"/>
</dbReference>
<dbReference type="InterPro" id="IPR014001">
    <property type="entry name" value="Helicase_ATP-bd"/>
</dbReference>
<dbReference type="InterPro" id="IPR027417">
    <property type="entry name" value="P-loop_NTPase"/>
</dbReference>
<dbReference type="InterPro" id="IPR005736">
    <property type="entry name" value="Reverse_gyrase"/>
</dbReference>
<dbReference type="InterPro" id="IPR003601">
    <property type="entry name" value="Topo_IA_2"/>
</dbReference>
<dbReference type="InterPro" id="IPR013497">
    <property type="entry name" value="Topo_IA_cen"/>
</dbReference>
<dbReference type="InterPro" id="IPR013824">
    <property type="entry name" value="Topo_IA_cen_sub1"/>
</dbReference>
<dbReference type="InterPro" id="IPR013826">
    <property type="entry name" value="Topo_IA_cen_sub3"/>
</dbReference>
<dbReference type="InterPro" id="IPR023405">
    <property type="entry name" value="Topo_IA_core_domain"/>
</dbReference>
<dbReference type="InterPro" id="IPR003602">
    <property type="entry name" value="Topo_IA_DNA-bd_dom"/>
</dbReference>
<dbReference type="InterPro" id="IPR006171">
    <property type="entry name" value="TOPRIM_dom"/>
</dbReference>
<dbReference type="InterPro" id="IPR034142">
    <property type="entry name" value="TOPRIM_RevGyr"/>
</dbReference>
<dbReference type="InterPro" id="IPR040569">
    <property type="entry name" value="Znf_Rg"/>
</dbReference>
<dbReference type="NCBIfam" id="TIGR01054">
    <property type="entry name" value="rgy"/>
    <property type="match status" value="1"/>
</dbReference>
<dbReference type="PANTHER" id="PTHR43505">
    <property type="entry name" value="REVERSE GYRASE"/>
    <property type="match status" value="1"/>
</dbReference>
<dbReference type="PANTHER" id="PTHR43505:SF1">
    <property type="entry name" value="REVERSE GYRASE"/>
    <property type="match status" value="1"/>
</dbReference>
<dbReference type="Pfam" id="PF00270">
    <property type="entry name" value="DEAD"/>
    <property type="match status" value="1"/>
</dbReference>
<dbReference type="Pfam" id="PF01131">
    <property type="entry name" value="Topoisom_bac"/>
    <property type="match status" value="1"/>
</dbReference>
<dbReference type="Pfam" id="PF01751">
    <property type="entry name" value="Toprim"/>
    <property type="match status" value="1"/>
</dbReference>
<dbReference type="Pfam" id="PF17915">
    <property type="entry name" value="zf_Rg"/>
    <property type="match status" value="1"/>
</dbReference>
<dbReference type="PRINTS" id="PR00417">
    <property type="entry name" value="PRTPISMRASEI"/>
</dbReference>
<dbReference type="SMART" id="SM00382">
    <property type="entry name" value="AAA"/>
    <property type="match status" value="1"/>
</dbReference>
<dbReference type="SMART" id="SM00487">
    <property type="entry name" value="DEXDc"/>
    <property type="match status" value="1"/>
</dbReference>
<dbReference type="SMART" id="SM00437">
    <property type="entry name" value="TOP1Ac"/>
    <property type="match status" value="1"/>
</dbReference>
<dbReference type="SMART" id="SM00436">
    <property type="entry name" value="TOP1Bc"/>
    <property type="match status" value="1"/>
</dbReference>
<dbReference type="SMART" id="SM00493">
    <property type="entry name" value="TOPRIM"/>
    <property type="match status" value="1"/>
</dbReference>
<dbReference type="SUPFAM" id="SSF52540">
    <property type="entry name" value="P-loop containing nucleoside triphosphate hydrolases"/>
    <property type="match status" value="2"/>
</dbReference>
<dbReference type="SUPFAM" id="SSF56712">
    <property type="entry name" value="Prokaryotic type I DNA topoisomerase"/>
    <property type="match status" value="1"/>
</dbReference>
<dbReference type="PROSITE" id="PS51192">
    <property type="entry name" value="HELICASE_ATP_BIND_1"/>
    <property type="match status" value="1"/>
</dbReference>
<dbReference type="PROSITE" id="PS51194">
    <property type="entry name" value="HELICASE_CTER"/>
    <property type="match status" value="1"/>
</dbReference>
<dbReference type="PROSITE" id="PS52039">
    <property type="entry name" value="TOPO_IA_2"/>
    <property type="match status" value="1"/>
</dbReference>
<dbReference type="PROSITE" id="PS50880">
    <property type="entry name" value="TOPRIM"/>
    <property type="match status" value="1"/>
</dbReference>
<dbReference type="PROSITE" id="PS52037">
    <property type="entry name" value="ZF_RG_C"/>
    <property type="match status" value="1"/>
</dbReference>
<dbReference type="PROSITE" id="PS52036">
    <property type="entry name" value="ZF_RG_N"/>
    <property type="match status" value="1"/>
</dbReference>
<gene>
    <name evidence="1" type="primary">rgy</name>
    <name evidence="15" type="synonym">topR</name>
    <name type="ordered locus">TM_0173</name>
</gene>
<protein>
    <recommendedName>
        <fullName evidence="1">Reverse gyrase</fullName>
        <ecNumber evidence="1 5 6 10 13">5.6.2.-</ecNumber>
    </recommendedName>
</protein>
<keyword id="KW-0002">3D-structure</keyword>
<keyword id="KW-0067">ATP-binding</keyword>
<keyword id="KW-0963">Cytoplasm</keyword>
<keyword id="KW-0238">DNA-binding</keyword>
<keyword id="KW-0413">Isomerase</keyword>
<keyword id="KW-0460">Magnesium</keyword>
<keyword id="KW-0479">Metal-binding</keyword>
<keyword id="KW-0547">Nucleotide-binding</keyword>
<keyword id="KW-1185">Reference proteome</keyword>
<keyword id="KW-0677">Repeat</keyword>
<keyword id="KW-0799">Topoisomerase</keyword>
<keyword id="KW-0862">Zinc</keyword>
<keyword id="KW-0863">Zinc-finger</keyword>
<comment type="function">
    <text evidence="5 6 7 9 10 11 13 16 17 18">Modifies the topological state of DNA by introducing positive supercoils in an ATP-dependent process (PubMed:18614530, PubMed:21051354, PubMed:23209025, PubMed:9440516). Increases the linking number in steps of +1 (Probable) (PubMed:23209025). Probably recognizes regions with a low GC content which melt and form a ssDNA bubble, allowing the enzyme to bind and cleave the DNA prior to strand passage; the bubble is probably cleaved by 2 reverse gyrase molecules, one on each strand (Probable) (PubMed:32592697). Positively supercoils DNA with all NTPS, although it strongly prefers ATP (PubMed:18614530). In the presence of non-hydrolyzable ATP analogs it partially relaxes negative supercoils (PubMed:18614530, PubMed:21051354, PubMed:32592697). Has an intrinsic ATPase activity that is stimulated by DNA; ssDNA is most effective (PubMed:18614530, PubMed:21051354, PubMed:32592697). Binds to single-stranded DNA, transiently cleaves and then rejoins the ends, introducing a positive supercoil in the process. The scissile phosphodiester is attacked by the catalytic tyrosine of the enzyme, resulting in the formation of a DNA-(5'-phosphotyrosyl)-enzyme intermediate (Probable) (PubMed:18614530, PubMed:32592697). The helicase-like domain is a nucleotide-dependent switch that alternates between a physically closed ATP-bound state with a slight preference for dsDNA, and an open ADP-bound state with a high preference for ssDNA (PubMed:21350762). Whole enzyme has a very poor (k-unwind=0.001 sec(-1)) non-processive helicase activity in the 3'-5' direction that works on short substrates, while the isolated helicase domain has a slightly better helicase activity that works in both directions (PubMed:23123378). Probably involved in rewinding DNA strands in regions of the chromosome that have opened up to allow replication, transcription, DNA repair and/or for DNA protection.</text>
</comment>
<comment type="catalytic activity">
    <reaction evidence="1 5">
        <text>ATP + H2O = ADP + phosphate + H(+)</text>
        <dbReference type="Rhea" id="RHEA:13065"/>
        <dbReference type="ChEBI" id="CHEBI:15377"/>
        <dbReference type="ChEBI" id="CHEBI:15378"/>
        <dbReference type="ChEBI" id="CHEBI:30616"/>
        <dbReference type="ChEBI" id="CHEBI:43474"/>
        <dbReference type="ChEBI" id="CHEBI:456216"/>
    </reaction>
</comment>
<comment type="cofactor">
    <cofactor evidence="1 10 21 22 23 26 27 28 29 30">
        <name>Zn(2+)</name>
        <dbReference type="ChEBI" id="CHEBI:29105"/>
    </cofactor>
    <text evidence="1 10 21 22 23 26 27 28 29 30">Binds 2 zinc ions per subunit.</text>
</comment>
<comment type="cofactor">
    <cofactor evidence="1 13">
        <name>Mg(2+)</name>
        <dbReference type="ChEBI" id="CHEBI:18420"/>
    </cofactor>
</comment>
<comment type="biophysicochemical properties">
    <kinetics>
        <KM evidence="6">44 uM for ATP without DNA</KM>
        <KM evidence="6">12 uM for ATP with 60 base ssDNA</KM>
        <KM evidence="6">16 uM for ATP with 60 bp dsDNA</KM>
        <KM evidence="6">15.6 uM for ATP with negatively supercoiled plasmid dsDNA</KM>
        <KM evidence="6">0.45 uM for ssDNA with ATP</KM>
        <KM evidence="6">2.2 uM for ssDNA with ATP</KM>
        <text evidence="6">kcat is 0.02 sec(-1) in the absence of DNA, 0.108 sec(-1) with 60 base ssDNA, 0.117 sec(-1) with 60 bp dsDNA, 0.199 sec(-1) with plasmid dsDNA (PubMed:21051354).</text>
    </kinetics>
    <temperatureDependence>
        <text evidence="5 6 13">Optimum temperature is 90 degrees Celsius for production of positive supercoils (PubMed:9440516). Thermostable for at least 4 hours at 85 degrees Celsius (PubMed:9440516). Optimum temperature is 65 degrees Celsius for ATPase activity (PubMed:18614530). The necessity for high temperature for positive supercoiling is probably because reverse gyrase preferentially binds to ssDNA (PubMed:21051354).</text>
    </temperatureDependence>
</comment>
<comment type="subunit">
    <text evidence="1 10">Monomer (PubMed:23209025).</text>
</comment>
<comment type="subcellular location">
    <subcellularLocation>
        <location evidence="1">Cytoplasm</location>
    </subcellularLocation>
</comment>
<comment type="domain">
    <text evidence="5 6 11 19">The zinc finger motif in the N-terminus is important for DNA binding, while conserved motifs in the helicase-like domain are important for ATP binding/hydrolysis as well as nucleotide specificity (PubMed:18614530). Introduction of positive supercoils requires the cooperation of both domains. The helicase-like domain probably does not directly unwind DNA, but more likely acts by driving ATP-dependent conformational changes within the whole enzyme. The 'latch' region (residues 389-459) of the N-terminal domain plays a regulatory role in the enzyme, repressing topoisomerase activity in the absence of ATP and preventing the enzyme from acting as an ATP-independent relaxing enzyme; it also helps to coordinate nucleotide hydrolysis by the ATPase domain with the supercoiling activity of the topoisomerase domain (PubMed:21051354). The latch can be reduced to a beta-hairpin formed by the extremities of the latch (removal of residues 395-455, the hairpin is residues 388-394 and 456-461); the enzyme still positively supercoils DNA and relaxes plasmid with non-hydrolyzable ATP analogs (PubMed:32592697). Residues 395-455 influence the cleavage-ligation equilibrium of the topoisomerase reaction, which is less efficient (PubMed:32592697). The latch domain may function as a steric block between the helicase-like and topoisomerase domains (Probable) (PubMed:37204816).</text>
</comment>
<comment type="domain">
    <text evidence="6 10">The zinc finger in the N-terminal helicase-like domain contacts the topoisomerase domain, providing a tight connection between the two (PubMed:23209025). The zinc finger domains are loosely interconnected (PubMed:23209025). The N-terminal helicase-like domain (residues 59-541) binds ATP ssDNA and dsDNA; deletion of the latch domain (residues 389-459) increases affinity for ADP analogs 2- to 7-fold and alters the ATP-bound enzyme's affinity for ssDNA, dsDNA and plasmid DNA (PubMed:21051354, PubMed:23209025). Deletion of the latch leads to a loss of cooperativity in ATP and DNA-binding within the helicase-like domain and alters the enzyme's preference for ssDNA over dsDNA (PubMed:21051354, PubMed:23209025). The latch is required for positive supercoiling, but not for nucleotide-mediated relaxation of DNA (PubMed:21051354, PubMed:23209025).</text>
</comment>
<comment type="domain">
    <text evidence="7 10">The helicase-like domain has subdomains H1 and H2; the cleft between them closes upon binding of ATP and any DNA substrate, and re-opens upon ATP hydrolysis (PubMed:21350762). The H1 subdomain has a small insert similar to UvrD while the H2 subdomain has the latch insert. Both insertions contribute to ssDNA binding (PubMed:23209025).</text>
</comment>
<comment type="miscellaneous">
    <text evidence="1">This enzyme is the only unique feature of hyperthermophilic bacteria/archaea known and seems to be essential for adaptation to life at high temperatures. It may play a role in stabilization of DNA at high temperatures.</text>
</comment>
<comment type="similarity">
    <text evidence="1 14">In the N-terminal section; belongs to the DEAD box helicase family. DDVD subfamily.</text>
</comment>
<comment type="similarity">
    <text evidence="1">In the C-terminal section; belongs to the type IA topoisomerase family.</text>
</comment>
<accession>O51934</accession>
<name>RGYR_THEMA</name>
<evidence type="ECO:0000255" key="1">
    <source>
        <dbReference type="HAMAP-Rule" id="MF_01125"/>
    </source>
</evidence>
<evidence type="ECO:0000255" key="2">
    <source>
        <dbReference type="PROSITE-ProRule" id="PRU01380"/>
    </source>
</evidence>
<evidence type="ECO:0000255" key="3">
    <source>
        <dbReference type="PROSITE-ProRule" id="PRU01381"/>
    </source>
</evidence>
<evidence type="ECO:0000255" key="4">
    <source>
        <dbReference type="PROSITE-ProRule" id="PRU01383"/>
    </source>
</evidence>
<evidence type="ECO:0000269" key="5">
    <source>
    </source>
</evidence>
<evidence type="ECO:0000269" key="6">
    <source>
    </source>
</evidence>
<evidence type="ECO:0000269" key="7">
    <source>
    </source>
</evidence>
<evidence type="ECO:0000269" key="8">
    <source>
    </source>
</evidence>
<evidence type="ECO:0000269" key="9">
    <source>
    </source>
</evidence>
<evidence type="ECO:0000269" key="10">
    <source>
    </source>
</evidence>
<evidence type="ECO:0000269" key="11">
    <source>
    </source>
</evidence>
<evidence type="ECO:0000269" key="12">
    <source>
    </source>
</evidence>
<evidence type="ECO:0000269" key="13">
    <source>
    </source>
</evidence>
<evidence type="ECO:0000303" key="14">
    <source>
    </source>
</evidence>
<evidence type="ECO:0000303" key="15">
    <source>
    </source>
</evidence>
<evidence type="ECO:0000305" key="16">
    <source>
    </source>
</evidence>
<evidence type="ECO:0000305" key="17">
    <source>
    </source>
</evidence>
<evidence type="ECO:0000305" key="18">
    <source>
    </source>
</evidence>
<evidence type="ECO:0000305" key="19">
    <source>
    </source>
</evidence>
<evidence type="ECO:0000312" key="20">
    <source>
        <dbReference type="PDB" id="3OIY"/>
    </source>
</evidence>
<evidence type="ECO:0000312" key="21">
    <source>
        <dbReference type="PDB" id="7FSE"/>
    </source>
</evidence>
<evidence type="ECO:0000312" key="22">
    <source>
        <dbReference type="PDB" id="7FSF"/>
    </source>
</evidence>
<evidence type="ECO:0000312" key="23">
    <source>
        <dbReference type="PDB" id="8OFB"/>
    </source>
</evidence>
<evidence type="ECO:0007744" key="24">
    <source>
        <dbReference type="PDB" id="3P4X"/>
    </source>
</evidence>
<evidence type="ECO:0007744" key="25">
    <source>
        <dbReference type="PDB" id="3P4Y"/>
    </source>
</evidence>
<evidence type="ECO:0007744" key="26">
    <source>
        <dbReference type="PDB" id="4DDT"/>
    </source>
</evidence>
<evidence type="ECO:0007744" key="27">
    <source>
        <dbReference type="PDB" id="4DDU"/>
    </source>
</evidence>
<evidence type="ECO:0007744" key="28">
    <source>
        <dbReference type="PDB" id="4DDV"/>
    </source>
</evidence>
<evidence type="ECO:0007744" key="29">
    <source>
        <dbReference type="PDB" id="4DDW"/>
    </source>
</evidence>
<evidence type="ECO:0007744" key="30">
    <source>
        <dbReference type="PDB" id="4DDX"/>
    </source>
</evidence>
<evidence type="ECO:0007744" key="31">
    <source>
        <dbReference type="PDB" id="8OFB"/>
    </source>
</evidence>
<evidence type="ECO:0007829" key="32">
    <source>
        <dbReference type="PDB" id="3OIY"/>
    </source>
</evidence>
<evidence type="ECO:0007829" key="33">
    <source>
        <dbReference type="PDB" id="3P4X"/>
    </source>
</evidence>
<evidence type="ECO:0007829" key="34">
    <source>
        <dbReference type="PDB" id="7FSF"/>
    </source>
</evidence>
<evidence type="ECO:0007829" key="35">
    <source>
        <dbReference type="PDB" id="8OFB"/>
    </source>
</evidence>